<feature type="chain" id="PRO_0000346600" description="Urease accessory protein UreD">
    <location>
        <begin position="1"/>
        <end position="278"/>
    </location>
</feature>
<evidence type="ECO:0000255" key="1">
    <source>
        <dbReference type="HAMAP-Rule" id="MF_01384"/>
    </source>
</evidence>
<sequence>MDEQQWTGQLDLTVFFDGNRSVSRDIFFEKALKVIRPVYLNQSTIPTFYIVNVGGGYLDGDRYRMNVNVEDNAKVTLTSQGATKIYKTPSNHVEQYQTFNLKDNAYLEYVADPIIAYENAKFYQHNTFNLNNSSSLFYTDILTPGYSKTGEAFKYQYMHLINEIYIEDELVTYDNLLLNPNKQSINEIGYMEHYSHYGSAYFIHEDVNQKLIDSVYETISSYSNTFDCRVAISQLPTHGFAVRIFAYRTQIIEKILGTIQSYIAENIYDRKLDFLRKY</sequence>
<reference key="1">
    <citation type="book" date="2006" name="Gram positive pathogens, 2nd edition">
        <title>The Staphylococcus aureus NCTC 8325 genome.</title>
        <editorList>
            <person name="Fischetti V."/>
            <person name="Novick R."/>
            <person name="Ferretti J."/>
            <person name="Portnoy D."/>
            <person name="Rood J."/>
        </editorList>
        <authorList>
            <person name="Gillaspy A.F."/>
            <person name="Worrell V."/>
            <person name="Orvis J."/>
            <person name="Roe B.A."/>
            <person name="Dyer D.W."/>
            <person name="Iandolo J.J."/>
        </authorList>
    </citation>
    <scope>NUCLEOTIDE SEQUENCE [LARGE SCALE GENOMIC DNA]</scope>
    <source>
        <strain>NCTC 8325 / PS 47</strain>
    </source>
</reference>
<keyword id="KW-0143">Chaperone</keyword>
<keyword id="KW-0963">Cytoplasm</keyword>
<keyword id="KW-0996">Nickel insertion</keyword>
<keyword id="KW-1185">Reference proteome</keyword>
<accession>Q2G272</accession>
<organism>
    <name type="scientific">Staphylococcus aureus (strain NCTC 8325 / PS 47)</name>
    <dbReference type="NCBI Taxonomy" id="93061"/>
    <lineage>
        <taxon>Bacteria</taxon>
        <taxon>Bacillati</taxon>
        <taxon>Bacillota</taxon>
        <taxon>Bacilli</taxon>
        <taxon>Bacillales</taxon>
        <taxon>Staphylococcaceae</taxon>
        <taxon>Staphylococcus</taxon>
    </lineage>
</organism>
<name>URED_STAA8</name>
<comment type="function">
    <text evidence="1">Required for maturation of urease via the functional incorporation of the urease nickel metallocenter.</text>
</comment>
<comment type="subunit">
    <text evidence="1">UreD, UreF and UreG form a complex that acts as a GTP-hydrolysis-dependent molecular chaperone, activating the urease apoprotein by helping to assemble the nickel containing metallocenter of UreC. The UreE protein probably delivers the nickel.</text>
</comment>
<comment type="subcellular location">
    <subcellularLocation>
        <location evidence="1">Cytoplasm</location>
    </subcellularLocation>
</comment>
<comment type="similarity">
    <text evidence="1">Belongs to the UreD family.</text>
</comment>
<protein>
    <recommendedName>
        <fullName evidence="1">Urease accessory protein UreD</fullName>
    </recommendedName>
</protein>
<dbReference type="EMBL" id="CP000253">
    <property type="protein sequence ID" value="ABD31577.1"/>
    <property type="molecule type" value="Genomic_DNA"/>
</dbReference>
<dbReference type="RefSeq" id="WP_000344352.1">
    <property type="nucleotide sequence ID" value="NZ_LS483365.1"/>
</dbReference>
<dbReference type="RefSeq" id="YP_501026.1">
    <property type="nucleotide sequence ID" value="NC_007795.1"/>
</dbReference>
<dbReference type="SMR" id="Q2G272"/>
<dbReference type="STRING" id="93061.SAOUHSC_02565"/>
<dbReference type="PaxDb" id="1280-SAXN108_2542"/>
<dbReference type="GeneID" id="3921562"/>
<dbReference type="KEGG" id="sao:SAOUHSC_02565"/>
<dbReference type="PATRIC" id="fig|93061.5.peg.2314"/>
<dbReference type="eggNOG" id="COG0829">
    <property type="taxonomic scope" value="Bacteria"/>
</dbReference>
<dbReference type="HOGENOM" id="CLU_056339_5_0_9"/>
<dbReference type="OrthoDB" id="9807968at2"/>
<dbReference type="PRO" id="PR:Q2G272"/>
<dbReference type="Proteomes" id="UP000008816">
    <property type="component" value="Chromosome"/>
</dbReference>
<dbReference type="GO" id="GO:0005737">
    <property type="term" value="C:cytoplasm"/>
    <property type="evidence" value="ECO:0007669"/>
    <property type="project" value="UniProtKB-SubCell"/>
</dbReference>
<dbReference type="GO" id="GO:0016151">
    <property type="term" value="F:nickel cation binding"/>
    <property type="evidence" value="ECO:0007669"/>
    <property type="project" value="UniProtKB-UniRule"/>
</dbReference>
<dbReference type="HAMAP" id="MF_01384">
    <property type="entry name" value="UreD"/>
    <property type="match status" value="1"/>
</dbReference>
<dbReference type="InterPro" id="IPR002669">
    <property type="entry name" value="UreD"/>
</dbReference>
<dbReference type="PANTHER" id="PTHR33643">
    <property type="entry name" value="UREASE ACCESSORY PROTEIN D"/>
    <property type="match status" value="1"/>
</dbReference>
<dbReference type="PANTHER" id="PTHR33643:SF1">
    <property type="entry name" value="UREASE ACCESSORY PROTEIN D"/>
    <property type="match status" value="1"/>
</dbReference>
<dbReference type="Pfam" id="PF01774">
    <property type="entry name" value="UreD"/>
    <property type="match status" value="1"/>
</dbReference>
<proteinExistence type="inferred from homology"/>
<gene>
    <name evidence="1" type="primary">ureD</name>
    <name type="ordered locus">SAOUHSC_02565</name>
</gene>